<reference key="1">
    <citation type="journal article" date="2003" name="Genome Res.">
        <title>Genome sequence of an M3 strain of Streptococcus pyogenes reveals a large-scale genomic rearrangement in invasive strains and new insights into phage evolution.</title>
        <authorList>
            <person name="Nakagawa I."/>
            <person name="Kurokawa K."/>
            <person name="Yamashita A."/>
            <person name="Nakata M."/>
            <person name="Tomiyasu Y."/>
            <person name="Okahashi N."/>
            <person name="Kawabata S."/>
            <person name="Yamazaki K."/>
            <person name="Shiba T."/>
            <person name="Yasunaga T."/>
            <person name="Hayashi H."/>
            <person name="Hattori M."/>
            <person name="Hamada S."/>
        </authorList>
    </citation>
    <scope>NUCLEOTIDE SEQUENCE [LARGE SCALE GENOMIC DNA]</scope>
    <source>
        <strain>SSI-1</strain>
    </source>
</reference>
<sequence length="418" mass="45079">MIFDKGNVEDFDKELWDAIHAEEERQEHHIELIASENMVSKAVMAAQGSVLTNKYAEGYPGNRYYGGTECVDIVETLAIERAKKLFGAAFANVQAHSGSQANAAAYMALIEAGDTVLGMDLAAGGHLTHGSPVNFSGKTYHFVGYSVDADTEMLNYEAILEQAKAVQPKLIVAGASAYSRNIDFEKFRAIADHVGAYLMVDMAHIAGLVAAGVHPSPVPYAHIVTSTTHKTLRGPRGGLILTNDEALAKKINSAVFPGLQGGPLEHVIAAKAVAFKEALDPAFKDYAQAIIDNTAAMAAVFAQDDRFRLISGGTDNHVFLVDVTKVIANGKLAQNLLDEVNITLNKNAIPFETLSPFNTSGIRIGCAAITSRGMGVKESQTIARLIIKALVNHDQETILEEVRQEVRQLTDAFPLYKK</sequence>
<dbReference type="EC" id="2.1.2.1" evidence="1"/>
<dbReference type="EMBL" id="BA000034">
    <property type="protein sequence ID" value="BAC64097.1"/>
    <property type="status" value="ALT_INIT"/>
    <property type="molecule type" value="Genomic_DNA"/>
</dbReference>
<dbReference type="RefSeq" id="WP_011054490.1">
    <property type="nucleotide sequence ID" value="NC_004606.1"/>
</dbReference>
<dbReference type="SMR" id="P0DF71"/>
<dbReference type="KEGG" id="sps:SPs1002"/>
<dbReference type="HOGENOM" id="CLU_022477_2_1_9"/>
<dbReference type="UniPathway" id="UPA00193"/>
<dbReference type="UniPathway" id="UPA00288">
    <property type="reaction ID" value="UER01023"/>
</dbReference>
<dbReference type="GO" id="GO:0005829">
    <property type="term" value="C:cytosol"/>
    <property type="evidence" value="ECO:0007669"/>
    <property type="project" value="TreeGrafter"/>
</dbReference>
<dbReference type="GO" id="GO:0004372">
    <property type="term" value="F:glycine hydroxymethyltransferase activity"/>
    <property type="evidence" value="ECO:0007669"/>
    <property type="project" value="UniProtKB-UniRule"/>
</dbReference>
<dbReference type="GO" id="GO:0030170">
    <property type="term" value="F:pyridoxal phosphate binding"/>
    <property type="evidence" value="ECO:0007669"/>
    <property type="project" value="UniProtKB-UniRule"/>
</dbReference>
<dbReference type="GO" id="GO:0019264">
    <property type="term" value="P:glycine biosynthetic process from serine"/>
    <property type="evidence" value="ECO:0007669"/>
    <property type="project" value="UniProtKB-UniRule"/>
</dbReference>
<dbReference type="GO" id="GO:0035999">
    <property type="term" value="P:tetrahydrofolate interconversion"/>
    <property type="evidence" value="ECO:0007669"/>
    <property type="project" value="UniProtKB-UniRule"/>
</dbReference>
<dbReference type="CDD" id="cd00378">
    <property type="entry name" value="SHMT"/>
    <property type="match status" value="1"/>
</dbReference>
<dbReference type="FunFam" id="3.40.640.10:FF:000001">
    <property type="entry name" value="Serine hydroxymethyltransferase"/>
    <property type="match status" value="1"/>
</dbReference>
<dbReference type="Gene3D" id="3.90.1150.10">
    <property type="entry name" value="Aspartate Aminotransferase, domain 1"/>
    <property type="match status" value="1"/>
</dbReference>
<dbReference type="Gene3D" id="3.40.640.10">
    <property type="entry name" value="Type I PLP-dependent aspartate aminotransferase-like (Major domain)"/>
    <property type="match status" value="1"/>
</dbReference>
<dbReference type="HAMAP" id="MF_00051">
    <property type="entry name" value="SHMT"/>
    <property type="match status" value="1"/>
</dbReference>
<dbReference type="InterPro" id="IPR015424">
    <property type="entry name" value="PyrdxlP-dep_Trfase"/>
</dbReference>
<dbReference type="InterPro" id="IPR015421">
    <property type="entry name" value="PyrdxlP-dep_Trfase_major"/>
</dbReference>
<dbReference type="InterPro" id="IPR015422">
    <property type="entry name" value="PyrdxlP-dep_Trfase_small"/>
</dbReference>
<dbReference type="InterPro" id="IPR001085">
    <property type="entry name" value="Ser_HO-MeTrfase"/>
</dbReference>
<dbReference type="InterPro" id="IPR049943">
    <property type="entry name" value="Ser_HO-MeTrfase-like"/>
</dbReference>
<dbReference type="InterPro" id="IPR019798">
    <property type="entry name" value="Ser_HO-MeTrfase_PLP_BS"/>
</dbReference>
<dbReference type="InterPro" id="IPR039429">
    <property type="entry name" value="SHMT-like_dom"/>
</dbReference>
<dbReference type="NCBIfam" id="NF000586">
    <property type="entry name" value="PRK00011.1"/>
    <property type="match status" value="1"/>
</dbReference>
<dbReference type="PANTHER" id="PTHR11680">
    <property type="entry name" value="SERINE HYDROXYMETHYLTRANSFERASE"/>
    <property type="match status" value="1"/>
</dbReference>
<dbReference type="PANTHER" id="PTHR11680:SF35">
    <property type="entry name" value="SERINE HYDROXYMETHYLTRANSFERASE 1"/>
    <property type="match status" value="1"/>
</dbReference>
<dbReference type="Pfam" id="PF00464">
    <property type="entry name" value="SHMT"/>
    <property type="match status" value="1"/>
</dbReference>
<dbReference type="PIRSF" id="PIRSF000412">
    <property type="entry name" value="SHMT"/>
    <property type="match status" value="1"/>
</dbReference>
<dbReference type="SUPFAM" id="SSF53383">
    <property type="entry name" value="PLP-dependent transferases"/>
    <property type="match status" value="1"/>
</dbReference>
<dbReference type="PROSITE" id="PS00096">
    <property type="entry name" value="SHMT"/>
    <property type="match status" value="1"/>
</dbReference>
<protein>
    <recommendedName>
        <fullName evidence="1">Serine hydroxymethyltransferase</fullName>
        <shortName evidence="1">SHMT</shortName>
        <shortName evidence="1">Serine methylase</shortName>
        <ecNumber evidence="1">2.1.2.1</ecNumber>
    </recommendedName>
</protein>
<accession>P0DF71</accession>
<accession>Q8K7H8</accession>
<evidence type="ECO:0000255" key="1">
    <source>
        <dbReference type="HAMAP-Rule" id="MF_00051"/>
    </source>
</evidence>
<evidence type="ECO:0000305" key="2"/>
<proteinExistence type="inferred from homology"/>
<organism>
    <name type="scientific">Streptococcus pyogenes serotype M3 (strain SSI-1)</name>
    <dbReference type="NCBI Taxonomy" id="193567"/>
    <lineage>
        <taxon>Bacteria</taxon>
        <taxon>Bacillati</taxon>
        <taxon>Bacillota</taxon>
        <taxon>Bacilli</taxon>
        <taxon>Lactobacillales</taxon>
        <taxon>Streptococcaceae</taxon>
        <taxon>Streptococcus</taxon>
    </lineage>
</organism>
<gene>
    <name evidence="1" type="primary">glyA</name>
    <name type="ordered locus">SPs1002</name>
</gene>
<name>GLYA_STRPQ</name>
<feature type="chain" id="PRO_0000411575" description="Serine hydroxymethyltransferase">
    <location>
        <begin position="1"/>
        <end position="418"/>
    </location>
</feature>
<feature type="binding site" evidence="1">
    <location>
        <position position="121"/>
    </location>
    <ligand>
        <name>(6S)-5,6,7,8-tetrahydrofolate</name>
        <dbReference type="ChEBI" id="CHEBI:57453"/>
    </ligand>
</feature>
<feature type="binding site" evidence="1">
    <location>
        <begin position="125"/>
        <end position="127"/>
    </location>
    <ligand>
        <name>(6S)-5,6,7,8-tetrahydrofolate</name>
        <dbReference type="ChEBI" id="CHEBI:57453"/>
    </ligand>
</feature>
<feature type="binding site" evidence="1">
    <location>
        <begin position="355"/>
        <end position="357"/>
    </location>
    <ligand>
        <name>(6S)-5,6,7,8-tetrahydrofolate</name>
        <dbReference type="ChEBI" id="CHEBI:57453"/>
    </ligand>
</feature>
<feature type="site" description="Plays an important role in substrate specificity" evidence="1">
    <location>
        <position position="229"/>
    </location>
</feature>
<feature type="modified residue" description="N6-(pyridoxal phosphate)lysine" evidence="1">
    <location>
        <position position="230"/>
    </location>
</feature>
<comment type="function">
    <text evidence="1">Catalyzes the reversible interconversion of serine and glycine with tetrahydrofolate (THF) serving as the one-carbon carrier. This reaction serves as the major source of one-carbon groups required for the biosynthesis of purines, thymidylate, methionine, and other important biomolecules. Also exhibits THF-independent aldolase activity toward beta-hydroxyamino acids, producing glycine and aldehydes, via a retro-aldol mechanism.</text>
</comment>
<comment type="catalytic activity">
    <reaction evidence="1">
        <text>(6R)-5,10-methylene-5,6,7,8-tetrahydrofolate + glycine + H2O = (6S)-5,6,7,8-tetrahydrofolate + L-serine</text>
        <dbReference type="Rhea" id="RHEA:15481"/>
        <dbReference type="ChEBI" id="CHEBI:15377"/>
        <dbReference type="ChEBI" id="CHEBI:15636"/>
        <dbReference type="ChEBI" id="CHEBI:33384"/>
        <dbReference type="ChEBI" id="CHEBI:57305"/>
        <dbReference type="ChEBI" id="CHEBI:57453"/>
        <dbReference type="EC" id="2.1.2.1"/>
    </reaction>
</comment>
<comment type="cofactor">
    <cofactor evidence="1">
        <name>pyridoxal 5'-phosphate</name>
        <dbReference type="ChEBI" id="CHEBI:597326"/>
    </cofactor>
</comment>
<comment type="pathway">
    <text evidence="1">One-carbon metabolism; tetrahydrofolate interconversion.</text>
</comment>
<comment type="pathway">
    <text evidence="1">Amino-acid biosynthesis; glycine biosynthesis; glycine from L-serine: step 1/1.</text>
</comment>
<comment type="subunit">
    <text evidence="1">Homodimer.</text>
</comment>
<comment type="subcellular location">
    <subcellularLocation>
        <location evidence="1">Cytoplasm</location>
    </subcellularLocation>
</comment>
<comment type="similarity">
    <text evidence="1">Belongs to the SHMT family.</text>
</comment>
<comment type="sequence caution" evidence="2">
    <conflict type="erroneous initiation">
        <sequence resource="EMBL-CDS" id="BAC64097"/>
    </conflict>
</comment>
<keyword id="KW-0028">Amino-acid biosynthesis</keyword>
<keyword id="KW-0963">Cytoplasm</keyword>
<keyword id="KW-0554">One-carbon metabolism</keyword>
<keyword id="KW-0663">Pyridoxal phosphate</keyword>
<keyword id="KW-0808">Transferase</keyword>